<reference key="1">
    <citation type="journal article" date="2010" name="J. Bacteriol.">
        <title>Complete genome sequence of Beijerinckia indica subsp. indica.</title>
        <authorList>
            <person name="Tamas I."/>
            <person name="Dedysh S.N."/>
            <person name="Liesack W."/>
            <person name="Stott M.B."/>
            <person name="Alam M."/>
            <person name="Murrell J.C."/>
            <person name="Dunfield P.F."/>
        </authorList>
    </citation>
    <scope>NUCLEOTIDE SEQUENCE [LARGE SCALE GENOMIC DNA]</scope>
    <source>
        <strain>ATCC 9039 / DSM 1715 / NCIMB 8712</strain>
    </source>
</reference>
<accession>B2IBH9</accession>
<protein>
    <recommendedName>
        <fullName evidence="1">Large ribosomal subunit protein bL20</fullName>
    </recommendedName>
    <alternativeName>
        <fullName evidence="2">50S ribosomal protein L20</fullName>
    </alternativeName>
</protein>
<proteinExistence type="inferred from homology"/>
<evidence type="ECO:0000255" key="1">
    <source>
        <dbReference type="HAMAP-Rule" id="MF_00382"/>
    </source>
</evidence>
<evidence type="ECO:0000305" key="2"/>
<feature type="chain" id="PRO_1000122275" description="Large ribosomal subunit protein bL20">
    <location>
        <begin position="1"/>
        <end position="121"/>
    </location>
</feature>
<comment type="function">
    <text evidence="1">Binds directly to 23S ribosomal RNA and is necessary for the in vitro assembly process of the 50S ribosomal subunit. It is not involved in the protein synthesizing functions of that subunit.</text>
</comment>
<comment type="similarity">
    <text evidence="1">Belongs to the bacterial ribosomal protein bL20 family.</text>
</comment>
<keyword id="KW-1185">Reference proteome</keyword>
<keyword id="KW-0687">Ribonucleoprotein</keyword>
<keyword id="KW-0689">Ribosomal protein</keyword>
<keyword id="KW-0694">RNA-binding</keyword>
<keyword id="KW-0699">rRNA-binding</keyword>
<sequence length="121" mass="13485">MARVKRGVTSHAKHKKTLEAATGFYGRRKNTIRAAKAAVDRSMQYATRDRRVKKRVFRALWIQRLNAAVRELGLTYSRFIDGLAKAGVEIDRKVLSELAISQPEAFKAIVEQAKSALATAG</sequence>
<dbReference type="EMBL" id="CP001016">
    <property type="protein sequence ID" value="ACB96605.1"/>
    <property type="molecule type" value="Genomic_DNA"/>
</dbReference>
<dbReference type="RefSeq" id="WP_012385954.1">
    <property type="nucleotide sequence ID" value="NC_010581.1"/>
</dbReference>
<dbReference type="SMR" id="B2IBH9"/>
<dbReference type="STRING" id="395963.Bind_3043"/>
<dbReference type="KEGG" id="bid:Bind_3043"/>
<dbReference type="eggNOG" id="COG0292">
    <property type="taxonomic scope" value="Bacteria"/>
</dbReference>
<dbReference type="HOGENOM" id="CLU_123265_0_1_5"/>
<dbReference type="OrthoDB" id="9808966at2"/>
<dbReference type="Proteomes" id="UP000001695">
    <property type="component" value="Chromosome"/>
</dbReference>
<dbReference type="GO" id="GO:1990904">
    <property type="term" value="C:ribonucleoprotein complex"/>
    <property type="evidence" value="ECO:0007669"/>
    <property type="project" value="UniProtKB-KW"/>
</dbReference>
<dbReference type="GO" id="GO:0005840">
    <property type="term" value="C:ribosome"/>
    <property type="evidence" value="ECO:0007669"/>
    <property type="project" value="UniProtKB-KW"/>
</dbReference>
<dbReference type="GO" id="GO:0019843">
    <property type="term" value="F:rRNA binding"/>
    <property type="evidence" value="ECO:0007669"/>
    <property type="project" value="UniProtKB-UniRule"/>
</dbReference>
<dbReference type="GO" id="GO:0003735">
    <property type="term" value="F:structural constituent of ribosome"/>
    <property type="evidence" value="ECO:0007669"/>
    <property type="project" value="InterPro"/>
</dbReference>
<dbReference type="GO" id="GO:0000027">
    <property type="term" value="P:ribosomal large subunit assembly"/>
    <property type="evidence" value="ECO:0007669"/>
    <property type="project" value="UniProtKB-UniRule"/>
</dbReference>
<dbReference type="GO" id="GO:0006412">
    <property type="term" value="P:translation"/>
    <property type="evidence" value="ECO:0007669"/>
    <property type="project" value="InterPro"/>
</dbReference>
<dbReference type="CDD" id="cd07026">
    <property type="entry name" value="Ribosomal_L20"/>
    <property type="match status" value="1"/>
</dbReference>
<dbReference type="FunFam" id="1.10.1900.20:FF:000001">
    <property type="entry name" value="50S ribosomal protein L20"/>
    <property type="match status" value="1"/>
</dbReference>
<dbReference type="Gene3D" id="6.10.160.10">
    <property type="match status" value="1"/>
</dbReference>
<dbReference type="Gene3D" id="1.10.1900.20">
    <property type="entry name" value="Ribosomal protein L20"/>
    <property type="match status" value="1"/>
</dbReference>
<dbReference type="HAMAP" id="MF_00382">
    <property type="entry name" value="Ribosomal_bL20"/>
    <property type="match status" value="1"/>
</dbReference>
<dbReference type="InterPro" id="IPR005813">
    <property type="entry name" value="Ribosomal_bL20"/>
</dbReference>
<dbReference type="InterPro" id="IPR049946">
    <property type="entry name" value="RIBOSOMAL_L20_CS"/>
</dbReference>
<dbReference type="InterPro" id="IPR035566">
    <property type="entry name" value="Ribosomal_protein_bL20_C"/>
</dbReference>
<dbReference type="NCBIfam" id="TIGR01032">
    <property type="entry name" value="rplT_bact"/>
    <property type="match status" value="1"/>
</dbReference>
<dbReference type="PANTHER" id="PTHR10986">
    <property type="entry name" value="39S RIBOSOMAL PROTEIN L20"/>
    <property type="match status" value="1"/>
</dbReference>
<dbReference type="Pfam" id="PF00453">
    <property type="entry name" value="Ribosomal_L20"/>
    <property type="match status" value="1"/>
</dbReference>
<dbReference type="PRINTS" id="PR00062">
    <property type="entry name" value="RIBOSOMALL20"/>
</dbReference>
<dbReference type="SUPFAM" id="SSF74731">
    <property type="entry name" value="Ribosomal protein L20"/>
    <property type="match status" value="1"/>
</dbReference>
<dbReference type="PROSITE" id="PS00937">
    <property type="entry name" value="RIBOSOMAL_L20"/>
    <property type="match status" value="1"/>
</dbReference>
<organism>
    <name type="scientific">Beijerinckia indica subsp. indica (strain ATCC 9039 / DSM 1715 / NCIMB 8712)</name>
    <dbReference type="NCBI Taxonomy" id="395963"/>
    <lineage>
        <taxon>Bacteria</taxon>
        <taxon>Pseudomonadati</taxon>
        <taxon>Pseudomonadota</taxon>
        <taxon>Alphaproteobacteria</taxon>
        <taxon>Hyphomicrobiales</taxon>
        <taxon>Beijerinckiaceae</taxon>
        <taxon>Beijerinckia</taxon>
    </lineage>
</organism>
<gene>
    <name evidence="1" type="primary">rplT</name>
    <name type="ordered locus">Bind_3043</name>
</gene>
<name>RL20_BEII9</name>